<keyword id="KW-0150">Chloroplast</keyword>
<keyword id="KW-0472">Membrane</keyword>
<keyword id="KW-0602">Photosynthesis</keyword>
<keyword id="KW-0604">Photosystem II</keyword>
<keyword id="KW-0934">Plastid</keyword>
<keyword id="KW-0674">Reaction center</keyword>
<keyword id="KW-1185">Reference proteome</keyword>
<keyword id="KW-0793">Thylakoid</keyword>
<keyword id="KW-0812">Transmembrane</keyword>
<keyword id="KW-1133">Transmembrane helix</keyword>
<evidence type="ECO:0000255" key="1">
    <source>
        <dbReference type="HAMAP-Rule" id="MF_01317"/>
    </source>
</evidence>
<sequence>MTQSNPNEQNVELNRTSLYWGLLLIFVLAVLFSNYFFN</sequence>
<gene>
    <name evidence="1" type="primary">psbL</name>
</gene>
<dbReference type="EMBL" id="EF115542">
    <property type="protein sequence ID" value="ABK79511.1"/>
    <property type="molecule type" value="Genomic_DNA"/>
</dbReference>
<dbReference type="RefSeq" id="YP_899422.1">
    <property type="nucleotide sequence ID" value="NC_008602.1"/>
</dbReference>
<dbReference type="SMR" id="A1E9T9"/>
<dbReference type="FunCoup" id="A1E9T9">
    <property type="interactions" value="149"/>
</dbReference>
<dbReference type="STRING" id="4558.A1E9T9"/>
<dbReference type="GeneID" id="4549174"/>
<dbReference type="KEGG" id="sbi:4549174"/>
<dbReference type="InParanoid" id="A1E9T9"/>
<dbReference type="OrthoDB" id="589260at2759"/>
<dbReference type="Proteomes" id="UP000000768">
    <property type="component" value="Chloroplast"/>
</dbReference>
<dbReference type="GO" id="GO:0009535">
    <property type="term" value="C:chloroplast thylakoid membrane"/>
    <property type="evidence" value="ECO:0007669"/>
    <property type="project" value="UniProtKB-SubCell"/>
</dbReference>
<dbReference type="GO" id="GO:0009539">
    <property type="term" value="C:photosystem II reaction center"/>
    <property type="evidence" value="ECO:0007669"/>
    <property type="project" value="InterPro"/>
</dbReference>
<dbReference type="GO" id="GO:0015979">
    <property type="term" value="P:photosynthesis"/>
    <property type="evidence" value="ECO:0007669"/>
    <property type="project" value="UniProtKB-UniRule"/>
</dbReference>
<dbReference type="HAMAP" id="MF_01317">
    <property type="entry name" value="PSII_PsbL"/>
    <property type="match status" value="1"/>
</dbReference>
<dbReference type="InterPro" id="IPR003372">
    <property type="entry name" value="PSII_PsbL"/>
</dbReference>
<dbReference type="InterPro" id="IPR037266">
    <property type="entry name" value="PSII_PsbL_sf"/>
</dbReference>
<dbReference type="NCBIfam" id="NF001972">
    <property type="entry name" value="PRK00753.1"/>
    <property type="match status" value="1"/>
</dbReference>
<dbReference type="Pfam" id="PF02419">
    <property type="entry name" value="PsbL"/>
    <property type="match status" value="1"/>
</dbReference>
<dbReference type="SUPFAM" id="SSF161017">
    <property type="entry name" value="Photosystem II reaction center protein L, PsbL"/>
    <property type="match status" value="1"/>
</dbReference>
<accession>A1E9T9</accession>
<proteinExistence type="inferred from homology"/>
<comment type="function">
    <text evidence="1">One of the components of the core complex of photosystem II (PSII). PSII is a light-driven water:plastoquinone oxidoreductase that uses light energy to abstract electrons from H(2)O, generating O(2) and a proton gradient subsequently used for ATP formation. It consists of a core antenna complex that captures photons, and an electron transfer chain that converts photonic excitation into a charge separation. This subunit is found at the monomer-monomer interface and is required for correct PSII assembly and/or dimerization.</text>
</comment>
<comment type="subunit">
    <text evidence="1">PSII is composed of 1 copy each of membrane proteins PsbA, PsbB, PsbC, PsbD, PsbE, PsbF, PsbH, PsbI, PsbJ, PsbK, PsbL, PsbM, PsbT, PsbX, PsbY, PsbZ, Psb30/Ycf12, at least 3 peripheral proteins of the oxygen-evolving complex and a large number of cofactors. It forms dimeric complexes.</text>
</comment>
<comment type="subcellular location">
    <subcellularLocation>
        <location evidence="1">Plastid</location>
        <location evidence="1">Chloroplast thylakoid membrane</location>
        <topology evidence="1">Single-pass membrane protein</topology>
    </subcellularLocation>
</comment>
<comment type="similarity">
    <text evidence="1">Belongs to the PsbL family.</text>
</comment>
<geneLocation type="chloroplast"/>
<protein>
    <recommendedName>
        <fullName evidence="1">Photosystem II reaction center protein L</fullName>
        <shortName evidence="1">PSII-L</shortName>
    </recommendedName>
</protein>
<organism>
    <name type="scientific">Sorghum bicolor</name>
    <name type="common">Sorghum</name>
    <name type="synonym">Sorghum vulgare</name>
    <dbReference type="NCBI Taxonomy" id="4558"/>
    <lineage>
        <taxon>Eukaryota</taxon>
        <taxon>Viridiplantae</taxon>
        <taxon>Streptophyta</taxon>
        <taxon>Embryophyta</taxon>
        <taxon>Tracheophyta</taxon>
        <taxon>Spermatophyta</taxon>
        <taxon>Magnoliopsida</taxon>
        <taxon>Liliopsida</taxon>
        <taxon>Poales</taxon>
        <taxon>Poaceae</taxon>
        <taxon>PACMAD clade</taxon>
        <taxon>Panicoideae</taxon>
        <taxon>Andropogonodae</taxon>
        <taxon>Andropogoneae</taxon>
        <taxon>Sorghinae</taxon>
        <taxon>Sorghum</taxon>
    </lineage>
</organism>
<reference key="1">
    <citation type="journal article" date="2007" name="Theor. Appl. Genet.">
        <title>Complete chloroplast genome sequences of Hordeum vulgare, Sorghum bicolor and Agrostis stolonifera, and comparative analyses with other grass genomes.</title>
        <authorList>
            <person name="Saski C."/>
            <person name="Lee S.-B."/>
            <person name="Fjellheim S."/>
            <person name="Guda C."/>
            <person name="Jansen R.K."/>
            <person name="Luo H."/>
            <person name="Tomkins J."/>
            <person name="Rognli O.A."/>
            <person name="Daniell H."/>
            <person name="Clarke J.L."/>
        </authorList>
    </citation>
    <scope>NUCLEOTIDE SEQUENCE [LARGE SCALE GENOMIC DNA]</scope>
    <source>
        <strain>cv. BTx623</strain>
    </source>
</reference>
<name>PSBL_SORBI</name>
<feature type="chain" id="PRO_0000276223" description="Photosystem II reaction center protein L">
    <location>
        <begin position="1"/>
        <end position="38"/>
    </location>
</feature>
<feature type="transmembrane region" description="Helical" evidence="1">
    <location>
        <begin position="17"/>
        <end position="37"/>
    </location>
</feature>